<comment type="similarity">
    <text evidence="1">Belongs to the bacterial ribosomal protein bL33 family.</text>
</comment>
<gene>
    <name evidence="1" type="primary">rpmG2</name>
    <name type="synonym">rpmGA</name>
    <name type="ordered locus">stu0623</name>
</gene>
<protein>
    <recommendedName>
        <fullName evidence="1">Large ribosomal subunit protein bL33B</fullName>
    </recommendedName>
    <alternativeName>
        <fullName evidence="1">50S ribosomal protein L33 2</fullName>
    </alternativeName>
</protein>
<organism>
    <name type="scientific">Streptococcus thermophilus (strain ATCC BAA-250 / LMG 18311)</name>
    <dbReference type="NCBI Taxonomy" id="264199"/>
    <lineage>
        <taxon>Bacteria</taxon>
        <taxon>Bacillati</taxon>
        <taxon>Bacillota</taxon>
        <taxon>Bacilli</taxon>
        <taxon>Lactobacillales</taxon>
        <taxon>Streptococcaceae</taxon>
        <taxon>Streptococcus</taxon>
    </lineage>
</organism>
<dbReference type="EMBL" id="CP000023">
    <property type="protein sequence ID" value="AAV60329.1"/>
    <property type="molecule type" value="Genomic_DNA"/>
</dbReference>
<dbReference type="SMR" id="Q5M573"/>
<dbReference type="STRING" id="264199.stu0623"/>
<dbReference type="KEGG" id="stl:stu0623"/>
<dbReference type="eggNOG" id="COG0267">
    <property type="taxonomic scope" value="Bacteria"/>
</dbReference>
<dbReference type="HOGENOM" id="CLU_190949_0_2_9"/>
<dbReference type="Proteomes" id="UP000001170">
    <property type="component" value="Chromosome"/>
</dbReference>
<dbReference type="GO" id="GO:0005737">
    <property type="term" value="C:cytoplasm"/>
    <property type="evidence" value="ECO:0007669"/>
    <property type="project" value="UniProtKB-ARBA"/>
</dbReference>
<dbReference type="GO" id="GO:1990904">
    <property type="term" value="C:ribonucleoprotein complex"/>
    <property type="evidence" value="ECO:0007669"/>
    <property type="project" value="UniProtKB-KW"/>
</dbReference>
<dbReference type="GO" id="GO:0005840">
    <property type="term" value="C:ribosome"/>
    <property type="evidence" value="ECO:0007669"/>
    <property type="project" value="UniProtKB-KW"/>
</dbReference>
<dbReference type="GO" id="GO:0003735">
    <property type="term" value="F:structural constituent of ribosome"/>
    <property type="evidence" value="ECO:0007669"/>
    <property type="project" value="InterPro"/>
</dbReference>
<dbReference type="GO" id="GO:0006412">
    <property type="term" value="P:translation"/>
    <property type="evidence" value="ECO:0007669"/>
    <property type="project" value="UniProtKB-UniRule"/>
</dbReference>
<dbReference type="Gene3D" id="2.20.28.120">
    <property type="entry name" value="Ribosomal protein L33"/>
    <property type="match status" value="1"/>
</dbReference>
<dbReference type="HAMAP" id="MF_00294">
    <property type="entry name" value="Ribosomal_bL33"/>
    <property type="match status" value="1"/>
</dbReference>
<dbReference type="InterPro" id="IPR001705">
    <property type="entry name" value="Ribosomal_bL33"/>
</dbReference>
<dbReference type="InterPro" id="IPR018264">
    <property type="entry name" value="Ribosomal_bL33_CS"/>
</dbReference>
<dbReference type="InterPro" id="IPR038584">
    <property type="entry name" value="Ribosomal_bL33_sf"/>
</dbReference>
<dbReference type="InterPro" id="IPR011332">
    <property type="entry name" value="Ribosomal_zn-bd"/>
</dbReference>
<dbReference type="NCBIfam" id="NF001764">
    <property type="entry name" value="PRK00504.1"/>
    <property type="match status" value="1"/>
</dbReference>
<dbReference type="NCBIfam" id="NF001860">
    <property type="entry name" value="PRK00595.1"/>
    <property type="match status" value="1"/>
</dbReference>
<dbReference type="NCBIfam" id="TIGR01023">
    <property type="entry name" value="rpmG_bact"/>
    <property type="match status" value="1"/>
</dbReference>
<dbReference type="PANTHER" id="PTHR43168">
    <property type="entry name" value="50S RIBOSOMAL PROTEIN L33, CHLOROPLASTIC"/>
    <property type="match status" value="1"/>
</dbReference>
<dbReference type="PANTHER" id="PTHR43168:SF6">
    <property type="entry name" value="LARGE RIBOSOMAL SUBUNIT PROTEIN BL33A"/>
    <property type="match status" value="1"/>
</dbReference>
<dbReference type="Pfam" id="PF00471">
    <property type="entry name" value="Ribosomal_L33"/>
    <property type="match status" value="1"/>
</dbReference>
<dbReference type="SUPFAM" id="SSF57829">
    <property type="entry name" value="Zn-binding ribosomal proteins"/>
    <property type="match status" value="1"/>
</dbReference>
<dbReference type="PROSITE" id="PS00582">
    <property type="entry name" value="RIBOSOMAL_L33"/>
    <property type="match status" value="1"/>
</dbReference>
<proteinExistence type="inferred from homology"/>
<reference key="1">
    <citation type="journal article" date="2004" name="Nat. Biotechnol.">
        <title>Complete sequence and comparative genome analysis of the dairy bacterium Streptococcus thermophilus.</title>
        <authorList>
            <person name="Bolotin A."/>
            <person name="Quinquis B."/>
            <person name="Renault P."/>
            <person name="Sorokin A."/>
            <person name="Ehrlich S.D."/>
            <person name="Kulakauskas S."/>
            <person name="Lapidus A."/>
            <person name="Goltsman E."/>
            <person name="Mazur M."/>
            <person name="Pusch G.D."/>
            <person name="Fonstein M."/>
            <person name="Overbeek R."/>
            <person name="Kyprides N."/>
            <person name="Purnelle B."/>
            <person name="Prozzi D."/>
            <person name="Ngui K."/>
            <person name="Masuy D."/>
            <person name="Hancy F."/>
            <person name="Burteau S."/>
            <person name="Boutry M."/>
            <person name="Delcour J."/>
            <person name="Goffeau A."/>
            <person name="Hols P."/>
        </authorList>
    </citation>
    <scope>NUCLEOTIDE SEQUENCE [LARGE SCALE GENOMIC DNA]</scope>
    <source>
        <strain>ATCC BAA-250 / LMG 18311</strain>
    </source>
</reference>
<evidence type="ECO:0000255" key="1">
    <source>
        <dbReference type="HAMAP-Rule" id="MF_00294"/>
    </source>
</evidence>
<accession>Q5M573</accession>
<sequence>MRVKINLKCSECGSLNYLTSKNKQNHPEKIQVPKFCPKDRKVTLHVES</sequence>
<name>RL332_STRT2</name>
<keyword id="KW-1185">Reference proteome</keyword>
<keyword id="KW-0687">Ribonucleoprotein</keyword>
<keyword id="KW-0689">Ribosomal protein</keyword>
<feature type="chain" id="PRO_0000356742" description="Large ribosomal subunit protein bL33B">
    <location>
        <begin position="1"/>
        <end position="48"/>
    </location>
</feature>